<organism>
    <name type="scientific">Legionella pneumophila subsp. pneumophila (strain Philadelphia 1 / ATCC 33152 / DSM 7513)</name>
    <dbReference type="NCBI Taxonomy" id="272624"/>
    <lineage>
        <taxon>Bacteria</taxon>
        <taxon>Pseudomonadati</taxon>
        <taxon>Pseudomonadota</taxon>
        <taxon>Gammaproteobacteria</taxon>
        <taxon>Legionellales</taxon>
        <taxon>Legionellaceae</taxon>
        <taxon>Legionella</taxon>
    </lineage>
</organism>
<keyword id="KW-0030">Aminoacyl-tRNA synthetase</keyword>
<keyword id="KW-0067">ATP-binding</keyword>
<keyword id="KW-0963">Cytoplasm</keyword>
<keyword id="KW-0436">Ligase</keyword>
<keyword id="KW-0460">Magnesium</keyword>
<keyword id="KW-0479">Metal-binding</keyword>
<keyword id="KW-0547">Nucleotide-binding</keyword>
<keyword id="KW-0648">Protein biosynthesis</keyword>
<keyword id="KW-1185">Reference proteome</keyword>
<accession>Q5ZS08</accession>
<evidence type="ECO:0000255" key="1">
    <source>
        <dbReference type="HAMAP-Rule" id="MF_00281"/>
    </source>
</evidence>
<proteinExistence type="inferred from homology"/>
<dbReference type="EC" id="6.1.1.20" evidence="1"/>
<dbReference type="EMBL" id="AE017354">
    <property type="protein sequence ID" value="AAU28769.1"/>
    <property type="molecule type" value="Genomic_DNA"/>
</dbReference>
<dbReference type="RefSeq" id="YP_096716.1">
    <property type="nucleotide sequence ID" value="NC_002942.5"/>
</dbReference>
<dbReference type="SMR" id="Q5ZS08"/>
<dbReference type="STRING" id="272624.lpg2711"/>
<dbReference type="PaxDb" id="272624-lpg2711"/>
<dbReference type="KEGG" id="lpn:lpg2711"/>
<dbReference type="PATRIC" id="fig|272624.6.peg.2896"/>
<dbReference type="eggNOG" id="COG0016">
    <property type="taxonomic scope" value="Bacteria"/>
</dbReference>
<dbReference type="HOGENOM" id="CLU_025086_0_1_6"/>
<dbReference type="OrthoDB" id="9800719at2"/>
<dbReference type="Proteomes" id="UP000000609">
    <property type="component" value="Chromosome"/>
</dbReference>
<dbReference type="GO" id="GO:0005737">
    <property type="term" value="C:cytoplasm"/>
    <property type="evidence" value="ECO:0007669"/>
    <property type="project" value="UniProtKB-SubCell"/>
</dbReference>
<dbReference type="GO" id="GO:0005524">
    <property type="term" value="F:ATP binding"/>
    <property type="evidence" value="ECO:0007669"/>
    <property type="project" value="UniProtKB-UniRule"/>
</dbReference>
<dbReference type="GO" id="GO:0000287">
    <property type="term" value="F:magnesium ion binding"/>
    <property type="evidence" value="ECO:0007669"/>
    <property type="project" value="UniProtKB-UniRule"/>
</dbReference>
<dbReference type="GO" id="GO:0004826">
    <property type="term" value="F:phenylalanine-tRNA ligase activity"/>
    <property type="evidence" value="ECO:0007669"/>
    <property type="project" value="UniProtKB-UniRule"/>
</dbReference>
<dbReference type="GO" id="GO:0000049">
    <property type="term" value="F:tRNA binding"/>
    <property type="evidence" value="ECO:0007669"/>
    <property type="project" value="InterPro"/>
</dbReference>
<dbReference type="GO" id="GO:0006432">
    <property type="term" value="P:phenylalanyl-tRNA aminoacylation"/>
    <property type="evidence" value="ECO:0007669"/>
    <property type="project" value="UniProtKB-UniRule"/>
</dbReference>
<dbReference type="CDD" id="cd00496">
    <property type="entry name" value="PheRS_alpha_core"/>
    <property type="match status" value="1"/>
</dbReference>
<dbReference type="FunFam" id="3.30.930.10:FF:000003">
    <property type="entry name" value="Phenylalanine--tRNA ligase alpha subunit"/>
    <property type="match status" value="1"/>
</dbReference>
<dbReference type="Gene3D" id="3.30.930.10">
    <property type="entry name" value="Bira Bifunctional Protein, Domain 2"/>
    <property type="match status" value="1"/>
</dbReference>
<dbReference type="HAMAP" id="MF_00281">
    <property type="entry name" value="Phe_tRNA_synth_alpha1"/>
    <property type="match status" value="1"/>
</dbReference>
<dbReference type="InterPro" id="IPR006195">
    <property type="entry name" value="aa-tRNA-synth_II"/>
</dbReference>
<dbReference type="InterPro" id="IPR045864">
    <property type="entry name" value="aa-tRNA-synth_II/BPL/LPL"/>
</dbReference>
<dbReference type="InterPro" id="IPR004529">
    <property type="entry name" value="Phe-tRNA-synth_IIc_asu"/>
</dbReference>
<dbReference type="InterPro" id="IPR004188">
    <property type="entry name" value="Phe-tRNA_ligase_II_N"/>
</dbReference>
<dbReference type="InterPro" id="IPR022911">
    <property type="entry name" value="Phe_tRNA_ligase_alpha1_bac"/>
</dbReference>
<dbReference type="InterPro" id="IPR002319">
    <property type="entry name" value="Phenylalanyl-tRNA_Synthase"/>
</dbReference>
<dbReference type="InterPro" id="IPR010978">
    <property type="entry name" value="tRNA-bd_arm"/>
</dbReference>
<dbReference type="NCBIfam" id="TIGR00468">
    <property type="entry name" value="pheS"/>
    <property type="match status" value="1"/>
</dbReference>
<dbReference type="PANTHER" id="PTHR11538:SF41">
    <property type="entry name" value="PHENYLALANINE--TRNA LIGASE, MITOCHONDRIAL"/>
    <property type="match status" value="1"/>
</dbReference>
<dbReference type="PANTHER" id="PTHR11538">
    <property type="entry name" value="PHENYLALANYL-TRNA SYNTHETASE"/>
    <property type="match status" value="1"/>
</dbReference>
<dbReference type="Pfam" id="PF02912">
    <property type="entry name" value="Phe_tRNA-synt_N"/>
    <property type="match status" value="1"/>
</dbReference>
<dbReference type="Pfam" id="PF01409">
    <property type="entry name" value="tRNA-synt_2d"/>
    <property type="match status" value="1"/>
</dbReference>
<dbReference type="SUPFAM" id="SSF55681">
    <property type="entry name" value="Class II aaRS and biotin synthetases"/>
    <property type="match status" value="1"/>
</dbReference>
<dbReference type="SUPFAM" id="SSF46589">
    <property type="entry name" value="tRNA-binding arm"/>
    <property type="match status" value="1"/>
</dbReference>
<dbReference type="PROSITE" id="PS50862">
    <property type="entry name" value="AA_TRNA_LIGASE_II"/>
    <property type="match status" value="1"/>
</dbReference>
<reference key="1">
    <citation type="journal article" date="2004" name="Science">
        <title>The genomic sequence of the accidental pathogen Legionella pneumophila.</title>
        <authorList>
            <person name="Chien M."/>
            <person name="Morozova I."/>
            <person name="Shi S."/>
            <person name="Sheng H."/>
            <person name="Chen J."/>
            <person name="Gomez S.M."/>
            <person name="Asamani G."/>
            <person name="Hill K."/>
            <person name="Nuara J."/>
            <person name="Feder M."/>
            <person name="Rineer J."/>
            <person name="Greenberg J.J."/>
            <person name="Steshenko V."/>
            <person name="Park S.H."/>
            <person name="Zhao B."/>
            <person name="Teplitskaya E."/>
            <person name="Edwards J.R."/>
            <person name="Pampou S."/>
            <person name="Georghiou A."/>
            <person name="Chou I.-C."/>
            <person name="Iannuccilli W."/>
            <person name="Ulz M.E."/>
            <person name="Kim D.H."/>
            <person name="Geringer-Sameth A."/>
            <person name="Goldsberry C."/>
            <person name="Morozov P."/>
            <person name="Fischer S.G."/>
            <person name="Segal G."/>
            <person name="Qu X."/>
            <person name="Rzhetsky A."/>
            <person name="Zhang P."/>
            <person name="Cayanis E."/>
            <person name="De Jong P.J."/>
            <person name="Ju J."/>
            <person name="Kalachikov S."/>
            <person name="Shuman H.A."/>
            <person name="Russo J.J."/>
        </authorList>
    </citation>
    <scope>NUCLEOTIDE SEQUENCE [LARGE SCALE GENOMIC DNA]</scope>
    <source>
        <strain>Philadelphia 1 / ATCC 33152 / DSM 7513</strain>
    </source>
</reference>
<sequence>MGRTMLVLINTIQEQASEAIKQATDIVALEQIRVDFLGKKGKLTELLKGLANLSAEEKPKVGQLVNQAKQGISALIETKMIELKEKQLLAKLAAEQIDVTLPGRNHSTGSLHPVTQVKHRINDYFSRLGFDIVEGPEIETEFYNFEALNIPGHHPARAMHDTFYFGDGRLLRTHTSPVQIRTMEQRKPPFRLIAPGRVYRCDSDVTHTPMFHQVEGLLIDKQATLAGLKGLLQDFFAYFFGRELALRFRPSYFPFTEPSAEVDIECTQCNGKGCRSCKFTGWLEVLGCGMVHPNVLIAVNIDPNEYHGWAFGMGMDRLAMLYYGIDDLRMLFENDLTFLRQF</sequence>
<name>SYFA_LEGPH</name>
<feature type="chain" id="PRO_0000231991" description="Phenylalanine--tRNA ligase alpha subunit">
    <location>
        <begin position="1"/>
        <end position="342"/>
    </location>
</feature>
<feature type="binding site" evidence="1">
    <location>
        <position position="257"/>
    </location>
    <ligand>
        <name>Mg(2+)</name>
        <dbReference type="ChEBI" id="CHEBI:18420"/>
        <note>shared with beta subunit</note>
    </ligand>
</feature>
<protein>
    <recommendedName>
        <fullName evidence="1">Phenylalanine--tRNA ligase alpha subunit</fullName>
        <ecNumber evidence="1">6.1.1.20</ecNumber>
    </recommendedName>
    <alternativeName>
        <fullName evidence="1">Phenylalanyl-tRNA synthetase alpha subunit</fullName>
        <shortName evidence="1">PheRS</shortName>
    </alternativeName>
</protein>
<comment type="catalytic activity">
    <reaction evidence="1">
        <text>tRNA(Phe) + L-phenylalanine + ATP = L-phenylalanyl-tRNA(Phe) + AMP + diphosphate + H(+)</text>
        <dbReference type="Rhea" id="RHEA:19413"/>
        <dbReference type="Rhea" id="RHEA-COMP:9668"/>
        <dbReference type="Rhea" id="RHEA-COMP:9699"/>
        <dbReference type="ChEBI" id="CHEBI:15378"/>
        <dbReference type="ChEBI" id="CHEBI:30616"/>
        <dbReference type="ChEBI" id="CHEBI:33019"/>
        <dbReference type="ChEBI" id="CHEBI:58095"/>
        <dbReference type="ChEBI" id="CHEBI:78442"/>
        <dbReference type="ChEBI" id="CHEBI:78531"/>
        <dbReference type="ChEBI" id="CHEBI:456215"/>
        <dbReference type="EC" id="6.1.1.20"/>
    </reaction>
</comment>
<comment type="cofactor">
    <cofactor evidence="1">
        <name>Mg(2+)</name>
        <dbReference type="ChEBI" id="CHEBI:18420"/>
    </cofactor>
    <text evidence="1">Binds 2 magnesium ions per tetramer.</text>
</comment>
<comment type="subunit">
    <text evidence="1">Tetramer of two alpha and two beta subunits.</text>
</comment>
<comment type="subcellular location">
    <subcellularLocation>
        <location evidence="1">Cytoplasm</location>
    </subcellularLocation>
</comment>
<comment type="similarity">
    <text evidence="1">Belongs to the class-II aminoacyl-tRNA synthetase family. Phe-tRNA synthetase alpha subunit type 1 subfamily.</text>
</comment>
<gene>
    <name evidence="1" type="primary">pheS</name>
    <name type="ordered locus">lpg2711</name>
</gene>